<comment type="function">
    <text evidence="1">Catalyzes the conversion of (8S)-3',8-cyclo-7,8-dihydroguanosine 5'-triphosphate to cyclic pyranopterin monophosphate (cPMP).</text>
</comment>
<comment type="catalytic activity">
    <reaction evidence="1">
        <text>(8S)-3',8-cyclo-7,8-dihydroguanosine 5'-triphosphate = cyclic pyranopterin phosphate + diphosphate</text>
        <dbReference type="Rhea" id="RHEA:49580"/>
        <dbReference type="ChEBI" id="CHEBI:33019"/>
        <dbReference type="ChEBI" id="CHEBI:59648"/>
        <dbReference type="ChEBI" id="CHEBI:131766"/>
        <dbReference type="EC" id="4.6.1.17"/>
    </reaction>
</comment>
<comment type="pathway">
    <text evidence="1">Cofactor biosynthesis; molybdopterin biosynthesis.</text>
</comment>
<comment type="subunit">
    <text evidence="1">Homohexamer; trimer of dimers.</text>
</comment>
<comment type="similarity">
    <text evidence="1">Belongs to the MoaC family.</text>
</comment>
<reference key="1">
    <citation type="journal article" date="2009" name="PLoS Genet.">
        <title>Organised genome dynamics in the Escherichia coli species results in highly diverse adaptive paths.</title>
        <authorList>
            <person name="Touchon M."/>
            <person name="Hoede C."/>
            <person name="Tenaillon O."/>
            <person name="Barbe V."/>
            <person name="Baeriswyl S."/>
            <person name="Bidet P."/>
            <person name="Bingen E."/>
            <person name="Bonacorsi S."/>
            <person name="Bouchier C."/>
            <person name="Bouvet O."/>
            <person name="Calteau A."/>
            <person name="Chiapello H."/>
            <person name="Clermont O."/>
            <person name="Cruveiller S."/>
            <person name="Danchin A."/>
            <person name="Diard M."/>
            <person name="Dossat C."/>
            <person name="Karoui M.E."/>
            <person name="Frapy E."/>
            <person name="Garry L."/>
            <person name="Ghigo J.M."/>
            <person name="Gilles A.M."/>
            <person name="Johnson J."/>
            <person name="Le Bouguenec C."/>
            <person name="Lescat M."/>
            <person name="Mangenot S."/>
            <person name="Martinez-Jehanne V."/>
            <person name="Matic I."/>
            <person name="Nassif X."/>
            <person name="Oztas S."/>
            <person name="Petit M.A."/>
            <person name="Pichon C."/>
            <person name="Rouy Z."/>
            <person name="Ruf C.S."/>
            <person name="Schneider D."/>
            <person name="Tourret J."/>
            <person name="Vacherie B."/>
            <person name="Vallenet D."/>
            <person name="Medigue C."/>
            <person name="Rocha E.P.C."/>
            <person name="Denamur E."/>
        </authorList>
    </citation>
    <scope>NUCLEOTIDE SEQUENCE [LARGE SCALE GENOMIC DNA]</scope>
    <source>
        <strain>IAI1</strain>
    </source>
</reference>
<accession>B7M755</accession>
<keyword id="KW-0456">Lyase</keyword>
<keyword id="KW-0501">Molybdenum cofactor biosynthesis</keyword>
<dbReference type="EC" id="4.6.1.17" evidence="1"/>
<dbReference type="EMBL" id="CU928160">
    <property type="protein sequence ID" value="CAQ97683.1"/>
    <property type="molecule type" value="Genomic_DNA"/>
</dbReference>
<dbReference type="RefSeq" id="WP_000080885.1">
    <property type="nucleotide sequence ID" value="NC_011741.1"/>
</dbReference>
<dbReference type="SMR" id="B7M755"/>
<dbReference type="GeneID" id="86945666"/>
<dbReference type="KEGG" id="ecr:ECIAI1_0818"/>
<dbReference type="HOGENOM" id="CLU_074693_1_1_6"/>
<dbReference type="UniPathway" id="UPA00344"/>
<dbReference type="GO" id="GO:0061799">
    <property type="term" value="F:cyclic pyranopterin monophosphate synthase activity"/>
    <property type="evidence" value="ECO:0007669"/>
    <property type="project" value="UniProtKB-UniRule"/>
</dbReference>
<dbReference type="GO" id="GO:0006777">
    <property type="term" value="P:Mo-molybdopterin cofactor biosynthetic process"/>
    <property type="evidence" value="ECO:0007669"/>
    <property type="project" value="UniProtKB-UniRule"/>
</dbReference>
<dbReference type="CDD" id="cd01420">
    <property type="entry name" value="MoaC_PE"/>
    <property type="match status" value="1"/>
</dbReference>
<dbReference type="FunFam" id="3.30.70.640:FF:000001">
    <property type="entry name" value="Cyclic pyranopterin monophosphate synthase"/>
    <property type="match status" value="1"/>
</dbReference>
<dbReference type="Gene3D" id="3.30.70.640">
    <property type="entry name" value="Molybdopterin cofactor biosynthesis C (MoaC) domain"/>
    <property type="match status" value="1"/>
</dbReference>
<dbReference type="HAMAP" id="MF_01224_B">
    <property type="entry name" value="MoaC_B"/>
    <property type="match status" value="1"/>
</dbReference>
<dbReference type="InterPro" id="IPR023045">
    <property type="entry name" value="MoaC"/>
</dbReference>
<dbReference type="InterPro" id="IPR047594">
    <property type="entry name" value="MoaC_bact/euk"/>
</dbReference>
<dbReference type="InterPro" id="IPR036522">
    <property type="entry name" value="MoaC_sf"/>
</dbReference>
<dbReference type="InterPro" id="IPR050105">
    <property type="entry name" value="MoCo_biosynth_MoaA/MoaC"/>
</dbReference>
<dbReference type="InterPro" id="IPR002820">
    <property type="entry name" value="Mopterin_CF_biosynth-C_dom"/>
</dbReference>
<dbReference type="NCBIfam" id="TIGR00581">
    <property type="entry name" value="moaC"/>
    <property type="match status" value="1"/>
</dbReference>
<dbReference type="NCBIfam" id="NF006870">
    <property type="entry name" value="PRK09364.1"/>
    <property type="match status" value="1"/>
</dbReference>
<dbReference type="PANTHER" id="PTHR22960">
    <property type="entry name" value="MOLYBDOPTERIN COFACTOR SYNTHESIS PROTEIN A"/>
    <property type="match status" value="1"/>
</dbReference>
<dbReference type="Pfam" id="PF01967">
    <property type="entry name" value="MoaC"/>
    <property type="match status" value="1"/>
</dbReference>
<dbReference type="SUPFAM" id="SSF55040">
    <property type="entry name" value="Molybdenum cofactor biosynthesis protein C, MoaC"/>
    <property type="match status" value="1"/>
</dbReference>
<name>MOAC_ECO8A</name>
<sequence>MSQLTHINAAGEAHMVDVSAKAETVREARAEAFVTMRSETLAMIIDGRHHKGDVFATARIAGIQAAKRTWDLIPLCHPLMLSKVEVNLQAEPEHNRVRIETLCRLTGKTGVEMEALTAASVAALTIYDMCKAVQKDMVIGPVRLLAKSGGKSGDFKVEADD</sequence>
<evidence type="ECO:0000255" key="1">
    <source>
        <dbReference type="HAMAP-Rule" id="MF_01224"/>
    </source>
</evidence>
<gene>
    <name evidence="1" type="primary">moaC</name>
    <name type="ordered locus">ECIAI1_0818</name>
</gene>
<proteinExistence type="inferred from homology"/>
<protein>
    <recommendedName>
        <fullName evidence="1">Cyclic pyranopterin monophosphate synthase</fullName>
        <ecNumber evidence="1">4.6.1.17</ecNumber>
    </recommendedName>
    <alternativeName>
        <fullName evidence="1">Molybdenum cofactor biosynthesis protein C</fullName>
    </alternativeName>
</protein>
<organism>
    <name type="scientific">Escherichia coli O8 (strain IAI1)</name>
    <dbReference type="NCBI Taxonomy" id="585034"/>
    <lineage>
        <taxon>Bacteria</taxon>
        <taxon>Pseudomonadati</taxon>
        <taxon>Pseudomonadota</taxon>
        <taxon>Gammaproteobacteria</taxon>
        <taxon>Enterobacterales</taxon>
        <taxon>Enterobacteriaceae</taxon>
        <taxon>Escherichia</taxon>
    </lineage>
</organism>
<feature type="chain" id="PRO_1000139263" description="Cyclic pyranopterin monophosphate synthase">
    <location>
        <begin position="1"/>
        <end position="161"/>
    </location>
</feature>
<feature type="active site" evidence="1">
    <location>
        <position position="128"/>
    </location>
</feature>
<feature type="binding site" evidence="1">
    <location>
        <begin position="75"/>
        <end position="77"/>
    </location>
    <ligand>
        <name>substrate</name>
    </ligand>
</feature>
<feature type="binding site" evidence="1">
    <location>
        <begin position="113"/>
        <end position="114"/>
    </location>
    <ligand>
        <name>substrate</name>
    </ligand>
</feature>